<name>PROA_PSEP7</name>
<proteinExistence type="inferred from homology"/>
<sequence>MTESVLDYMSRLGRDARAASRLLARAATAQKNRALLAAADALDAARAELSHANEQDLAAGRANGLEPAMLDRLALTPARIDDMIEGLRQVATLPDPIGEIRDMRYVPSGIQIGKMRVPLGVVGIIYESRPNVTIDAASLCLKSGNATILRGGSEAIHSNQAIARCIQQGLAEAGLPAAAVQVVETTDRAAVGALISMPEYVDVIVPRGGKGLIERISREARVPVIKHLDGICHVYIDVAADLDKAIRVADNAKTQRYAPCNTMETLLVHAGIAERVLPPLAAIYREKGVELRGDAATRALLGADVLEATEEDWRTEYNAPILSIRIVDGLGAAIEHINTYGSQHTDAIITENFSDARRFLAEVDSASVMVNASTRFADGFEYGLGAEIGISTDKLHARGPVGLEGLTSEKYVVFGDGHVRT</sequence>
<gene>
    <name evidence="1" type="primary">proA</name>
    <name type="ordered locus">PSPA7_1102</name>
</gene>
<organism>
    <name type="scientific">Pseudomonas paraeruginosa (strain DSM 24068 / PA7)</name>
    <name type="common">Pseudomonas aeruginosa (strain PA7)</name>
    <dbReference type="NCBI Taxonomy" id="381754"/>
    <lineage>
        <taxon>Bacteria</taxon>
        <taxon>Pseudomonadati</taxon>
        <taxon>Pseudomonadota</taxon>
        <taxon>Gammaproteobacteria</taxon>
        <taxon>Pseudomonadales</taxon>
        <taxon>Pseudomonadaceae</taxon>
        <taxon>Pseudomonas</taxon>
        <taxon>Pseudomonas paraeruginosa</taxon>
    </lineage>
</organism>
<feature type="chain" id="PRO_1000049981" description="Gamma-glutamyl phosphate reductase">
    <location>
        <begin position="1"/>
        <end position="421"/>
    </location>
</feature>
<keyword id="KW-0028">Amino-acid biosynthesis</keyword>
<keyword id="KW-0963">Cytoplasm</keyword>
<keyword id="KW-0521">NADP</keyword>
<keyword id="KW-0560">Oxidoreductase</keyword>
<keyword id="KW-0641">Proline biosynthesis</keyword>
<protein>
    <recommendedName>
        <fullName evidence="1">Gamma-glutamyl phosphate reductase</fullName>
        <shortName evidence="1">GPR</shortName>
        <ecNumber evidence="1">1.2.1.41</ecNumber>
    </recommendedName>
    <alternativeName>
        <fullName evidence="1">Glutamate-5-semialdehyde dehydrogenase</fullName>
    </alternativeName>
    <alternativeName>
        <fullName evidence="1">Glutamyl-gamma-semialdehyde dehydrogenase</fullName>
        <shortName evidence="1">GSA dehydrogenase</shortName>
    </alternativeName>
</protein>
<reference key="1">
    <citation type="submission" date="2007-06" db="EMBL/GenBank/DDBJ databases">
        <authorList>
            <person name="Dodson R.J."/>
            <person name="Harkins D."/>
            <person name="Paulsen I.T."/>
        </authorList>
    </citation>
    <scope>NUCLEOTIDE SEQUENCE [LARGE SCALE GENOMIC DNA]</scope>
    <source>
        <strain>DSM 24068 / PA7</strain>
    </source>
</reference>
<evidence type="ECO:0000255" key="1">
    <source>
        <dbReference type="HAMAP-Rule" id="MF_00412"/>
    </source>
</evidence>
<comment type="function">
    <text evidence="1">Catalyzes the NADPH-dependent reduction of L-glutamate 5-phosphate into L-glutamate 5-semialdehyde and phosphate. The product spontaneously undergoes cyclization to form 1-pyrroline-5-carboxylate.</text>
</comment>
<comment type="catalytic activity">
    <reaction evidence="1">
        <text>L-glutamate 5-semialdehyde + phosphate + NADP(+) = L-glutamyl 5-phosphate + NADPH + H(+)</text>
        <dbReference type="Rhea" id="RHEA:19541"/>
        <dbReference type="ChEBI" id="CHEBI:15378"/>
        <dbReference type="ChEBI" id="CHEBI:43474"/>
        <dbReference type="ChEBI" id="CHEBI:57783"/>
        <dbReference type="ChEBI" id="CHEBI:58066"/>
        <dbReference type="ChEBI" id="CHEBI:58274"/>
        <dbReference type="ChEBI" id="CHEBI:58349"/>
        <dbReference type="EC" id="1.2.1.41"/>
    </reaction>
</comment>
<comment type="pathway">
    <text evidence="1">Amino-acid biosynthesis; L-proline biosynthesis; L-glutamate 5-semialdehyde from L-glutamate: step 2/2.</text>
</comment>
<comment type="subcellular location">
    <subcellularLocation>
        <location evidence="1">Cytoplasm</location>
    </subcellularLocation>
</comment>
<comment type="similarity">
    <text evidence="1">Belongs to the gamma-glutamyl phosphate reductase family.</text>
</comment>
<dbReference type="EC" id="1.2.1.41" evidence="1"/>
<dbReference type="EMBL" id="CP000744">
    <property type="protein sequence ID" value="ABR81075.1"/>
    <property type="molecule type" value="Genomic_DNA"/>
</dbReference>
<dbReference type="RefSeq" id="WP_012074425.1">
    <property type="nucleotide sequence ID" value="NC_009656.1"/>
</dbReference>
<dbReference type="SMR" id="A6V0A3"/>
<dbReference type="KEGG" id="pap:PSPA7_1102"/>
<dbReference type="HOGENOM" id="CLU_030231_0_0_6"/>
<dbReference type="UniPathway" id="UPA00098">
    <property type="reaction ID" value="UER00360"/>
</dbReference>
<dbReference type="Proteomes" id="UP000001582">
    <property type="component" value="Chromosome"/>
</dbReference>
<dbReference type="GO" id="GO:0005737">
    <property type="term" value="C:cytoplasm"/>
    <property type="evidence" value="ECO:0007669"/>
    <property type="project" value="UniProtKB-SubCell"/>
</dbReference>
<dbReference type="GO" id="GO:0004350">
    <property type="term" value="F:glutamate-5-semialdehyde dehydrogenase activity"/>
    <property type="evidence" value="ECO:0007669"/>
    <property type="project" value="UniProtKB-UniRule"/>
</dbReference>
<dbReference type="GO" id="GO:0050661">
    <property type="term" value="F:NADP binding"/>
    <property type="evidence" value="ECO:0007669"/>
    <property type="project" value="InterPro"/>
</dbReference>
<dbReference type="GO" id="GO:0055129">
    <property type="term" value="P:L-proline biosynthetic process"/>
    <property type="evidence" value="ECO:0007669"/>
    <property type="project" value="UniProtKB-UniRule"/>
</dbReference>
<dbReference type="CDD" id="cd07079">
    <property type="entry name" value="ALDH_F18-19_ProA-GPR"/>
    <property type="match status" value="1"/>
</dbReference>
<dbReference type="FunFam" id="3.40.309.10:FF:000006">
    <property type="entry name" value="Gamma-glutamyl phosphate reductase"/>
    <property type="match status" value="1"/>
</dbReference>
<dbReference type="Gene3D" id="3.40.605.10">
    <property type="entry name" value="Aldehyde Dehydrogenase, Chain A, domain 1"/>
    <property type="match status" value="1"/>
</dbReference>
<dbReference type="Gene3D" id="3.40.309.10">
    <property type="entry name" value="Aldehyde Dehydrogenase, Chain A, domain 2"/>
    <property type="match status" value="1"/>
</dbReference>
<dbReference type="HAMAP" id="MF_00412">
    <property type="entry name" value="ProA"/>
    <property type="match status" value="1"/>
</dbReference>
<dbReference type="InterPro" id="IPR016161">
    <property type="entry name" value="Ald_DH/histidinol_DH"/>
</dbReference>
<dbReference type="InterPro" id="IPR016163">
    <property type="entry name" value="Ald_DH_C"/>
</dbReference>
<dbReference type="InterPro" id="IPR016162">
    <property type="entry name" value="Ald_DH_N"/>
</dbReference>
<dbReference type="InterPro" id="IPR015590">
    <property type="entry name" value="Aldehyde_DH_dom"/>
</dbReference>
<dbReference type="InterPro" id="IPR020593">
    <property type="entry name" value="G-glutamylP_reductase_CS"/>
</dbReference>
<dbReference type="InterPro" id="IPR012134">
    <property type="entry name" value="Glu-5-SA_DH"/>
</dbReference>
<dbReference type="InterPro" id="IPR000965">
    <property type="entry name" value="GPR_dom"/>
</dbReference>
<dbReference type="NCBIfam" id="NF001221">
    <property type="entry name" value="PRK00197.1"/>
    <property type="match status" value="1"/>
</dbReference>
<dbReference type="NCBIfam" id="TIGR00407">
    <property type="entry name" value="proA"/>
    <property type="match status" value="1"/>
</dbReference>
<dbReference type="PANTHER" id="PTHR11063:SF8">
    <property type="entry name" value="DELTA-1-PYRROLINE-5-CARBOXYLATE SYNTHASE"/>
    <property type="match status" value="1"/>
</dbReference>
<dbReference type="PANTHER" id="PTHR11063">
    <property type="entry name" value="GLUTAMATE SEMIALDEHYDE DEHYDROGENASE"/>
    <property type="match status" value="1"/>
</dbReference>
<dbReference type="Pfam" id="PF00171">
    <property type="entry name" value="Aldedh"/>
    <property type="match status" value="1"/>
</dbReference>
<dbReference type="PIRSF" id="PIRSF000151">
    <property type="entry name" value="GPR"/>
    <property type="match status" value="1"/>
</dbReference>
<dbReference type="SUPFAM" id="SSF53720">
    <property type="entry name" value="ALDH-like"/>
    <property type="match status" value="1"/>
</dbReference>
<dbReference type="PROSITE" id="PS01223">
    <property type="entry name" value="PROA"/>
    <property type="match status" value="1"/>
</dbReference>
<accession>A6V0A3</accession>